<keyword id="KW-0274">FAD</keyword>
<keyword id="KW-0285">Flavoprotein</keyword>
<keyword id="KW-0521">NADP</keyword>
<keyword id="KW-0560">Oxidoreductase</keyword>
<organism>
    <name type="scientific">Staphylococcus aureus (strain JH9)</name>
    <dbReference type="NCBI Taxonomy" id="359786"/>
    <lineage>
        <taxon>Bacteria</taxon>
        <taxon>Bacillati</taxon>
        <taxon>Bacillota</taxon>
        <taxon>Bacilli</taxon>
        <taxon>Bacillales</taxon>
        <taxon>Staphylococcaceae</taxon>
        <taxon>Staphylococcus</taxon>
    </lineage>
</organism>
<proteinExistence type="inferred from homology"/>
<reference key="1">
    <citation type="submission" date="2007-05" db="EMBL/GenBank/DDBJ databases">
        <title>Complete sequence of chromosome of Staphylococcus aureus subsp. aureus JH9.</title>
        <authorList>
            <consortium name="US DOE Joint Genome Institute"/>
            <person name="Copeland A."/>
            <person name="Lucas S."/>
            <person name="Lapidus A."/>
            <person name="Barry K."/>
            <person name="Detter J.C."/>
            <person name="Glavina del Rio T."/>
            <person name="Hammon N."/>
            <person name="Israni S."/>
            <person name="Pitluck S."/>
            <person name="Chain P."/>
            <person name="Malfatti S."/>
            <person name="Shin M."/>
            <person name="Vergez L."/>
            <person name="Schmutz J."/>
            <person name="Larimer F."/>
            <person name="Land M."/>
            <person name="Hauser L."/>
            <person name="Kyrpides N."/>
            <person name="Kim E."/>
            <person name="Tomasz A."/>
            <person name="Richardson P."/>
        </authorList>
    </citation>
    <scope>NUCLEOTIDE SEQUENCE [LARGE SCALE GENOMIC DNA]</scope>
    <source>
        <strain>JH9</strain>
    </source>
</reference>
<dbReference type="EC" id="1.18.1.2" evidence="1"/>
<dbReference type="EMBL" id="CP000703">
    <property type="protein sequence ID" value="ABQ50176.1"/>
    <property type="molecule type" value="Genomic_DNA"/>
</dbReference>
<dbReference type="RefSeq" id="WP_000655971.1">
    <property type="nucleotide sequence ID" value="NC_009487.1"/>
</dbReference>
<dbReference type="SMR" id="A5IVF3"/>
<dbReference type="KEGG" id="saj:SaurJH9_2396"/>
<dbReference type="HOGENOM" id="CLU_031864_5_5_9"/>
<dbReference type="GO" id="GO:0004324">
    <property type="term" value="F:ferredoxin-NADP+ reductase activity"/>
    <property type="evidence" value="ECO:0007669"/>
    <property type="project" value="UniProtKB-UniRule"/>
</dbReference>
<dbReference type="GO" id="GO:0050660">
    <property type="term" value="F:flavin adenine dinucleotide binding"/>
    <property type="evidence" value="ECO:0007669"/>
    <property type="project" value="UniProtKB-UniRule"/>
</dbReference>
<dbReference type="GO" id="GO:0050661">
    <property type="term" value="F:NADP binding"/>
    <property type="evidence" value="ECO:0007669"/>
    <property type="project" value="UniProtKB-UniRule"/>
</dbReference>
<dbReference type="Gene3D" id="3.50.50.60">
    <property type="entry name" value="FAD/NAD(P)-binding domain"/>
    <property type="match status" value="2"/>
</dbReference>
<dbReference type="HAMAP" id="MF_01685">
    <property type="entry name" value="FENR2"/>
    <property type="match status" value="1"/>
</dbReference>
<dbReference type="InterPro" id="IPR036188">
    <property type="entry name" value="FAD/NAD-bd_sf"/>
</dbReference>
<dbReference type="InterPro" id="IPR023753">
    <property type="entry name" value="FAD/NAD-binding_dom"/>
</dbReference>
<dbReference type="InterPro" id="IPR022890">
    <property type="entry name" value="Fd--NADP_Rdtase_type_2"/>
</dbReference>
<dbReference type="InterPro" id="IPR050097">
    <property type="entry name" value="Ferredoxin-NADP_redctase_2"/>
</dbReference>
<dbReference type="PANTHER" id="PTHR48105">
    <property type="entry name" value="THIOREDOXIN REDUCTASE 1-RELATED-RELATED"/>
    <property type="match status" value="1"/>
</dbReference>
<dbReference type="Pfam" id="PF07992">
    <property type="entry name" value="Pyr_redox_2"/>
    <property type="match status" value="1"/>
</dbReference>
<dbReference type="PRINTS" id="PR00368">
    <property type="entry name" value="FADPNR"/>
</dbReference>
<dbReference type="PRINTS" id="PR00469">
    <property type="entry name" value="PNDRDTASEII"/>
</dbReference>
<dbReference type="SUPFAM" id="SSF51905">
    <property type="entry name" value="FAD/NAD(P)-binding domain"/>
    <property type="match status" value="1"/>
</dbReference>
<protein>
    <recommendedName>
        <fullName evidence="1">Ferredoxin--NADP reductase</fullName>
        <shortName evidence="1">FNR</shortName>
        <shortName evidence="1">Fd-NADP(+) reductase</shortName>
        <ecNumber evidence="1">1.18.1.2</ecNumber>
    </recommendedName>
</protein>
<evidence type="ECO:0000255" key="1">
    <source>
        <dbReference type="HAMAP-Rule" id="MF_01685"/>
    </source>
</evidence>
<accession>A5IVF3</accession>
<feature type="chain" id="PRO_0000364937" description="Ferredoxin--NADP reductase">
    <location>
        <begin position="1"/>
        <end position="344"/>
    </location>
</feature>
<feature type="binding site" evidence="1">
    <location>
        <position position="12"/>
    </location>
    <ligand>
        <name>FAD</name>
        <dbReference type="ChEBI" id="CHEBI:57692"/>
    </ligand>
</feature>
<feature type="binding site" evidence="1">
    <location>
        <position position="31"/>
    </location>
    <ligand>
        <name>FAD</name>
        <dbReference type="ChEBI" id="CHEBI:57692"/>
    </ligand>
</feature>
<feature type="binding site" evidence="1">
    <location>
        <position position="39"/>
    </location>
    <ligand>
        <name>FAD</name>
        <dbReference type="ChEBI" id="CHEBI:57692"/>
    </ligand>
</feature>
<feature type="binding site" evidence="1">
    <location>
        <position position="43"/>
    </location>
    <ligand>
        <name>FAD</name>
        <dbReference type="ChEBI" id="CHEBI:57692"/>
    </ligand>
</feature>
<feature type="binding site" evidence="1">
    <location>
        <position position="83"/>
    </location>
    <ligand>
        <name>FAD</name>
        <dbReference type="ChEBI" id="CHEBI:57692"/>
    </ligand>
</feature>
<feature type="binding site" evidence="1">
    <location>
        <position position="118"/>
    </location>
    <ligand>
        <name>FAD</name>
        <dbReference type="ChEBI" id="CHEBI:57692"/>
    </ligand>
</feature>
<feature type="binding site" evidence="1">
    <location>
        <position position="285"/>
    </location>
    <ligand>
        <name>FAD</name>
        <dbReference type="ChEBI" id="CHEBI:57692"/>
    </ligand>
</feature>
<feature type="binding site" evidence="1">
    <location>
        <position position="326"/>
    </location>
    <ligand>
        <name>FAD</name>
        <dbReference type="ChEBI" id="CHEBI:57692"/>
    </ligand>
</feature>
<name>FENR_STAA9</name>
<gene>
    <name type="ordered locus">SaurJH9_2396</name>
</gene>
<comment type="catalytic activity">
    <reaction evidence="1">
        <text>2 reduced [2Fe-2S]-[ferredoxin] + NADP(+) + H(+) = 2 oxidized [2Fe-2S]-[ferredoxin] + NADPH</text>
        <dbReference type="Rhea" id="RHEA:20125"/>
        <dbReference type="Rhea" id="RHEA-COMP:10000"/>
        <dbReference type="Rhea" id="RHEA-COMP:10001"/>
        <dbReference type="ChEBI" id="CHEBI:15378"/>
        <dbReference type="ChEBI" id="CHEBI:33737"/>
        <dbReference type="ChEBI" id="CHEBI:33738"/>
        <dbReference type="ChEBI" id="CHEBI:57783"/>
        <dbReference type="ChEBI" id="CHEBI:58349"/>
        <dbReference type="EC" id="1.18.1.2"/>
    </reaction>
</comment>
<comment type="cofactor">
    <cofactor evidence="1">
        <name>FAD</name>
        <dbReference type="ChEBI" id="CHEBI:57692"/>
    </cofactor>
    <text evidence="1">Binds 1 FAD per subunit.</text>
</comment>
<comment type="subunit">
    <text evidence="1">Homodimer.</text>
</comment>
<comment type="similarity">
    <text evidence="1">Belongs to the ferredoxin--NADP reductase type 2 family.</text>
</comment>
<sequence length="344" mass="38230">MKDVTIIGGGPSGLYASFYAGLRDMSVRLIDVQSELGGKMRIYPEKIIWDIGGIAPKPCHEILKDTIKQGLYFKPEVHLNERVVDIRKKAERHFEVETEAGEIYTSKAVIIAIGAGIINPKQLDVKGVERYQLTNLHYVVQSYRRFKDKDVLISGGGNTALDWAHDIAKIAKSVTVVYRKEDVSGHEAMKTLVTDLNVKLCPKTRIKYLVGNDDETHISEVVLEHVESGDRHTVKFDDVIISHGFDRCNTLLSETSSKLDMHDDCRVKGFGNTTTSIPGIYACGDIVYHDAKSHLIASAFSDGANAANLAKTYIQPDANAEGYVSSHHEVFKEANKTIVNKHLY</sequence>